<keyword id="KW-0687">Ribonucleoprotein</keyword>
<keyword id="KW-0689">Ribosomal protein</keyword>
<keyword id="KW-0694">RNA-binding</keyword>
<keyword id="KW-0699">rRNA-binding</keyword>
<reference key="1">
    <citation type="submission" date="2007-12" db="EMBL/GenBank/DDBJ databases">
        <title>Complete sequence of Methylobacterium extorquens PA1.</title>
        <authorList>
            <consortium name="US DOE Joint Genome Institute"/>
            <person name="Copeland A."/>
            <person name="Lucas S."/>
            <person name="Lapidus A."/>
            <person name="Barry K."/>
            <person name="Glavina del Rio T."/>
            <person name="Dalin E."/>
            <person name="Tice H."/>
            <person name="Pitluck S."/>
            <person name="Saunders E."/>
            <person name="Brettin T."/>
            <person name="Bruce D."/>
            <person name="Detter J.C."/>
            <person name="Han C."/>
            <person name="Schmutz J."/>
            <person name="Larimer F."/>
            <person name="Land M."/>
            <person name="Hauser L."/>
            <person name="Kyrpides N."/>
            <person name="Kim E."/>
            <person name="Marx C."/>
            <person name="Richardson P."/>
        </authorList>
    </citation>
    <scope>NUCLEOTIDE SEQUENCE [LARGE SCALE GENOMIC DNA]</scope>
    <source>
        <strain>PA1</strain>
    </source>
</reference>
<accession>A9VYM8</accession>
<evidence type="ECO:0000255" key="1">
    <source>
        <dbReference type="HAMAP-Rule" id="MF_01363"/>
    </source>
</evidence>
<evidence type="ECO:0000256" key="2">
    <source>
        <dbReference type="SAM" id="MobiDB-lite"/>
    </source>
</evidence>
<evidence type="ECO:0000305" key="3"/>
<sequence length="130" mass="13904">MFAVIKTGGKQYRVAANDVITVATLEGEAGAAVTFGDVLLFTDGDATQVGTPLLSGIGVTGEIVQHGRTRKVIAFKKRRRQNSRRRRGHRQDFTVVRITEISAGGKTSKAEPRKTRKAEPAAESAPAAAE</sequence>
<gene>
    <name evidence="1" type="primary">rplU</name>
    <name type="ordered locus">Mext_4414</name>
</gene>
<name>RL21_METEP</name>
<dbReference type="EMBL" id="CP000908">
    <property type="protein sequence ID" value="ABY32782.1"/>
    <property type="molecule type" value="Genomic_DNA"/>
</dbReference>
<dbReference type="SMR" id="A9VYM8"/>
<dbReference type="KEGG" id="mex:Mext_4414"/>
<dbReference type="eggNOG" id="COG0261">
    <property type="taxonomic scope" value="Bacteria"/>
</dbReference>
<dbReference type="HOGENOM" id="CLU_061463_1_2_5"/>
<dbReference type="BioCyc" id="MEXT419610:MEXT_RS22180-MONOMER"/>
<dbReference type="GO" id="GO:0005737">
    <property type="term" value="C:cytoplasm"/>
    <property type="evidence" value="ECO:0007669"/>
    <property type="project" value="UniProtKB-ARBA"/>
</dbReference>
<dbReference type="GO" id="GO:1990904">
    <property type="term" value="C:ribonucleoprotein complex"/>
    <property type="evidence" value="ECO:0007669"/>
    <property type="project" value="UniProtKB-KW"/>
</dbReference>
<dbReference type="GO" id="GO:0005840">
    <property type="term" value="C:ribosome"/>
    <property type="evidence" value="ECO:0007669"/>
    <property type="project" value="UniProtKB-KW"/>
</dbReference>
<dbReference type="GO" id="GO:0019843">
    <property type="term" value="F:rRNA binding"/>
    <property type="evidence" value="ECO:0007669"/>
    <property type="project" value="UniProtKB-UniRule"/>
</dbReference>
<dbReference type="GO" id="GO:0003735">
    <property type="term" value="F:structural constituent of ribosome"/>
    <property type="evidence" value="ECO:0007669"/>
    <property type="project" value="InterPro"/>
</dbReference>
<dbReference type="GO" id="GO:0006412">
    <property type="term" value="P:translation"/>
    <property type="evidence" value="ECO:0007669"/>
    <property type="project" value="UniProtKB-UniRule"/>
</dbReference>
<dbReference type="HAMAP" id="MF_01363">
    <property type="entry name" value="Ribosomal_bL21"/>
    <property type="match status" value="1"/>
</dbReference>
<dbReference type="InterPro" id="IPR028909">
    <property type="entry name" value="bL21-like"/>
</dbReference>
<dbReference type="InterPro" id="IPR036164">
    <property type="entry name" value="bL21-like_sf"/>
</dbReference>
<dbReference type="InterPro" id="IPR001787">
    <property type="entry name" value="Ribosomal_bL21"/>
</dbReference>
<dbReference type="NCBIfam" id="TIGR00061">
    <property type="entry name" value="L21"/>
    <property type="match status" value="1"/>
</dbReference>
<dbReference type="PANTHER" id="PTHR21349">
    <property type="entry name" value="50S RIBOSOMAL PROTEIN L21"/>
    <property type="match status" value="1"/>
</dbReference>
<dbReference type="PANTHER" id="PTHR21349:SF0">
    <property type="entry name" value="LARGE RIBOSOMAL SUBUNIT PROTEIN BL21M"/>
    <property type="match status" value="1"/>
</dbReference>
<dbReference type="Pfam" id="PF00829">
    <property type="entry name" value="Ribosomal_L21p"/>
    <property type="match status" value="1"/>
</dbReference>
<dbReference type="SUPFAM" id="SSF141091">
    <property type="entry name" value="L21p-like"/>
    <property type="match status" value="1"/>
</dbReference>
<protein>
    <recommendedName>
        <fullName evidence="1">Large ribosomal subunit protein bL21</fullName>
    </recommendedName>
    <alternativeName>
        <fullName evidence="3">50S ribosomal protein L21</fullName>
    </alternativeName>
</protein>
<feature type="chain" id="PRO_1000143819" description="Large ribosomal subunit protein bL21">
    <location>
        <begin position="1"/>
        <end position="130"/>
    </location>
</feature>
<feature type="region of interest" description="Disordered" evidence="2">
    <location>
        <begin position="103"/>
        <end position="130"/>
    </location>
</feature>
<feature type="compositionally biased region" description="Basic and acidic residues" evidence="2">
    <location>
        <begin position="108"/>
        <end position="120"/>
    </location>
</feature>
<feature type="compositionally biased region" description="Low complexity" evidence="2">
    <location>
        <begin position="121"/>
        <end position="130"/>
    </location>
</feature>
<comment type="function">
    <text evidence="1">This protein binds to 23S rRNA in the presence of protein L20.</text>
</comment>
<comment type="subunit">
    <text evidence="1">Part of the 50S ribosomal subunit. Contacts protein L20.</text>
</comment>
<comment type="similarity">
    <text evidence="1">Belongs to the bacterial ribosomal protein bL21 family.</text>
</comment>
<proteinExistence type="inferred from homology"/>
<organism>
    <name type="scientific">Methylorubrum extorquens (strain PA1)</name>
    <name type="common">Methylobacterium extorquens</name>
    <dbReference type="NCBI Taxonomy" id="419610"/>
    <lineage>
        <taxon>Bacteria</taxon>
        <taxon>Pseudomonadati</taxon>
        <taxon>Pseudomonadota</taxon>
        <taxon>Alphaproteobacteria</taxon>
        <taxon>Hyphomicrobiales</taxon>
        <taxon>Methylobacteriaceae</taxon>
        <taxon>Methylorubrum</taxon>
    </lineage>
</organism>